<protein>
    <recommendedName>
        <fullName>Oxidative stress-responsive serine-rich protein 1</fullName>
    </recommendedName>
    <alternativeName>
        <fullName>Oxidative stress-responsive protein 1</fullName>
    </alternativeName>
    <alternativeName>
        <fullName>Peroxide-inducible transcript 1 protein</fullName>
    </alternativeName>
</protein>
<name>OSER1_PONAB</name>
<reference key="1">
    <citation type="submission" date="2004-11" db="EMBL/GenBank/DDBJ databases">
        <authorList>
            <consortium name="The German cDNA consortium"/>
        </authorList>
    </citation>
    <scope>NUCLEOTIDE SEQUENCE [LARGE SCALE MRNA]</scope>
    <source>
        <tissue>Heart</tissue>
    </source>
</reference>
<feature type="chain" id="PRO_0000079455" description="Oxidative stress-responsive serine-rich protein 1">
    <location>
        <begin position="1"/>
        <end position="292"/>
    </location>
</feature>
<feature type="region of interest" description="Disordered" evidence="3">
    <location>
        <begin position="27"/>
        <end position="175"/>
    </location>
</feature>
<feature type="compositionally biased region" description="Basic residues" evidence="3">
    <location>
        <begin position="65"/>
        <end position="83"/>
    </location>
</feature>
<feature type="modified residue" description="Phosphothreonine" evidence="1">
    <location>
        <position position="143"/>
    </location>
</feature>
<feature type="modified residue" description="Phosphothreonine" evidence="2">
    <location>
        <position position="233"/>
    </location>
</feature>
<dbReference type="EMBL" id="CR858110">
    <property type="protein sequence ID" value="CAH90349.1"/>
    <property type="molecule type" value="mRNA"/>
</dbReference>
<dbReference type="RefSeq" id="NP_001127274.1">
    <property type="nucleotide sequence ID" value="NM_001133802.2"/>
</dbReference>
<dbReference type="RefSeq" id="XP_009231879.1">
    <property type="nucleotide sequence ID" value="XM_009233604.4"/>
</dbReference>
<dbReference type="FunCoup" id="Q5RD08">
    <property type="interactions" value="1398"/>
</dbReference>
<dbReference type="Ensembl" id="ENSPPYT00000012796.3">
    <property type="protein sequence ID" value="ENSPPYP00000012315.2"/>
    <property type="gene ID" value="ENSPPYG00000011027.3"/>
</dbReference>
<dbReference type="GeneID" id="100174331"/>
<dbReference type="KEGG" id="pon:100174331"/>
<dbReference type="CTD" id="51526"/>
<dbReference type="eggNOG" id="ENOG502QUK0">
    <property type="taxonomic scope" value="Eukaryota"/>
</dbReference>
<dbReference type="GeneTree" id="ENSGT00390000018547"/>
<dbReference type="HOGENOM" id="CLU_050222_0_0_1"/>
<dbReference type="InParanoid" id="Q5RD08"/>
<dbReference type="OMA" id="KACQCKL"/>
<dbReference type="OrthoDB" id="10045817at2759"/>
<dbReference type="TreeFam" id="TF331727"/>
<dbReference type="Proteomes" id="UP000001595">
    <property type="component" value="Chromosome 20"/>
</dbReference>
<dbReference type="GO" id="GO:0005634">
    <property type="term" value="C:nucleus"/>
    <property type="evidence" value="ECO:0007669"/>
    <property type="project" value="Ensembl"/>
</dbReference>
<dbReference type="GO" id="GO:0070301">
    <property type="term" value="P:cellular response to hydrogen peroxide"/>
    <property type="evidence" value="ECO:0007669"/>
    <property type="project" value="TreeGrafter"/>
</dbReference>
<dbReference type="InterPro" id="IPR008494">
    <property type="entry name" value="DUF776"/>
</dbReference>
<dbReference type="PANTHER" id="PTHR31383">
    <property type="entry name" value="OXIDATIVE STRESS-RESPONSE SERINE-RICH PROTEIN 1"/>
    <property type="match status" value="1"/>
</dbReference>
<dbReference type="PANTHER" id="PTHR31383:SF2">
    <property type="entry name" value="OXIDATIVE STRESS-RESPONSIVE SERINE-RICH PROTEIN 1"/>
    <property type="match status" value="1"/>
</dbReference>
<dbReference type="Pfam" id="PF05604">
    <property type="entry name" value="DUF776"/>
    <property type="match status" value="1"/>
</dbReference>
<evidence type="ECO:0000250" key="1">
    <source>
        <dbReference type="UniProtKB" id="Q703I1"/>
    </source>
</evidence>
<evidence type="ECO:0000250" key="2">
    <source>
        <dbReference type="UniProtKB" id="Q9NX31"/>
    </source>
</evidence>
<evidence type="ECO:0000256" key="3">
    <source>
        <dbReference type="SAM" id="MobiDB-lite"/>
    </source>
</evidence>
<organism>
    <name type="scientific">Pongo abelii</name>
    <name type="common">Sumatran orangutan</name>
    <name type="synonym">Pongo pygmaeus abelii</name>
    <dbReference type="NCBI Taxonomy" id="9601"/>
    <lineage>
        <taxon>Eukaryota</taxon>
        <taxon>Metazoa</taxon>
        <taxon>Chordata</taxon>
        <taxon>Craniata</taxon>
        <taxon>Vertebrata</taxon>
        <taxon>Euteleostomi</taxon>
        <taxon>Mammalia</taxon>
        <taxon>Eutheria</taxon>
        <taxon>Euarchontoglires</taxon>
        <taxon>Primates</taxon>
        <taxon>Haplorrhini</taxon>
        <taxon>Catarrhini</taxon>
        <taxon>Hominidae</taxon>
        <taxon>Pongo</taxon>
    </lineage>
</organism>
<sequence>MKSEAKDGEEESLQTAFKKLRVDASGSIASLSVGEGTGVRAPVRTATDDTKPKTTCASKDSWHGSTRKSSRGVVRTQRRRRSKSPVLHPPKFIHCSTIASSSSSQLKHKSQTDSPDGSSGLGISSPKEFSAGESSASLDANHTGAVVEPLRTSVPRLPSESKKEDSSDATQVSQASLKASDLSDFQSVSKLNQGTPCTCIGKECQCKRWHDMEVYSFSGLQSVPPLAPERRSTLEDYSQSLHARTLSGSPRSCSEQARVFVDDVTIEDLSGYMEYYLYIPKKMSHMAEMMYT</sequence>
<proteinExistence type="evidence at transcript level"/>
<gene>
    <name type="primary">OSER1</name>
</gene>
<accession>Q5RD08</accession>
<keyword id="KW-0597">Phosphoprotein</keyword>
<keyword id="KW-1185">Reference proteome</keyword>